<accession>Q59YL9</accession>
<accession>A0A1D8PNC5</accession>
<accession>Q59Z08</accession>
<comment type="function">
    <text evidence="1">Involved in the small subunit (SSU) processome assembly and function, and in the 18S rRNA synthesis. Required for the early cleavages at sites A0, A1 and A2 (By similarity).</text>
</comment>
<comment type="subcellular location">
    <subcellularLocation>
        <location evidence="1">Nucleus</location>
        <location evidence="1">Nucleolus</location>
    </subcellularLocation>
</comment>
<comment type="similarity">
    <text evidence="3">Belongs to the ESF2/ABP1 family.</text>
</comment>
<sequence>MSATSDRESDFESEDENNFQDKVFNVKSKTSSFFHANTSDNEDFSEDEEDKDEQDEGDTKTKPKDGKHNFEDIAYDEESEENIGDDEDGNADLSLDGGSKVNKKLKKLTSKELAKEQKRIKRTGVCYLSRVPPYMKPAKLRSVLSRFGEIDRLFLKPEDPSVYHKRVKYGGNKKKNFTEGWIEFVNKSDAKLCAATLNGNKLGGKKTSYYYDDIINIKYLPGFKWLDLTQQIAKENEVRQAKLAMEISQQQKLNKSFVSNVEKSKMIANIQKKRKTTDDDNIRRDFKQRKVTTTRSDAKDDLKSKSKPTDKLNDILSKVF</sequence>
<proteinExistence type="inferred from homology"/>
<keyword id="KW-0539">Nucleus</keyword>
<keyword id="KW-1185">Reference proteome</keyword>
<keyword id="KW-0690">Ribosome biogenesis</keyword>
<keyword id="KW-0694">RNA-binding</keyword>
<keyword id="KW-0698">rRNA processing</keyword>
<dbReference type="EMBL" id="CP017627">
    <property type="protein sequence ID" value="AOW29636.1"/>
    <property type="molecule type" value="Genomic_DNA"/>
</dbReference>
<dbReference type="RefSeq" id="XP_714579.2">
    <property type="nucleotide sequence ID" value="XM_709486.2"/>
</dbReference>
<dbReference type="BioGRID" id="1226716">
    <property type="interactions" value="1"/>
</dbReference>
<dbReference type="FunCoup" id="Q59YL9">
    <property type="interactions" value="991"/>
</dbReference>
<dbReference type="STRING" id="237561.Q59YL9"/>
<dbReference type="EnsemblFungi" id="C5_02070C_A-T">
    <property type="protein sequence ID" value="C5_02070C_A-T-p1"/>
    <property type="gene ID" value="C5_02070C_A"/>
</dbReference>
<dbReference type="GeneID" id="3643746"/>
<dbReference type="KEGG" id="cal:CAALFM_C502070CA"/>
<dbReference type="CGD" id="CAL0000181506">
    <property type="gene designation" value="orf19.10670"/>
</dbReference>
<dbReference type="VEuPathDB" id="FungiDB:C5_02070C_A"/>
<dbReference type="eggNOG" id="KOG3152">
    <property type="taxonomic scope" value="Eukaryota"/>
</dbReference>
<dbReference type="HOGENOM" id="CLU_054086_0_0_1"/>
<dbReference type="InParanoid" id="Q59YL9"/>
<dbReference type="OrthoDB" id="287393at2759"/>
<dbReference type="PRO" id="PR:Q59YL9"/>
<dbReference type="Proteomes" id="UP000000559">
    <property type="component" value="Chromosome 5"/>
</dbReference>
<dbReference type="GO" id="GO:0005730">
    <property type="term" value="C:nucleolus"/>
    <property type="evidence" value="ECO:0000318"/>
    <property type="project" value="GO_Central"/>
</dbReference>
<dbReference type="GO" id="GO:0003723">
    <property type="term" value="F:RNA binding"/>
    <property type="evidence" value="ECO:0000318"/>
    <property type="project" value="GO_Central"/>
</dbReference>
<dbReference type="GO" id="GO:0000480">
    <property type="term" value="P:endonucleolytic cleavage in 5'-ETS of tricistronic rRNA transcript (SSU-rRNA, 5.8S rRNA, LSU-rRNA)"/>
    <property type="evidence" value="ECO:0000318"/>
    <property type="project" value="GO_Central"/>
</dbReference>
<dbReference type="GO" id="GO:0000447">
    <property type="term" value="P:endonucleolytic cleavage in ITS1 to separate SSU-rRNA from 5.8S rRNA and LSU-rRNA from tricistronic rRNA transcript (SSU-rRNA, 5.8S rRNA, LSU-rRNA)"/>
    <property type="evidence" value="ECO:0000318"/>
    <property type="project" value="GO_Central"/>
</dbReference>
<dbReference type="GO" id="GO:0000472">
    <property type="term" value="P:endonucleolytic cleavage to generate mature 5'-end of SSU-rRNA from (SSU-rRNA, 5.8S rRNA, LSU-rRNA)"/>
    <property type="evidence" value="ECO:0000318"/>
    <property type="project" value="GO_Central"/>
</dbReference>
<dbReference type="GO" id="GO:0034462">
    <property type="term" value="P:small-subunit processome assembly"/>
    <property type="evidence" value="ECO:0000318"/>
    <property type="project" value="GO_Central"/>
</dbReference>
<dbReference type="CDD" id="cd12263">
    <property type="entry name" value="RRM_ABT1_like"/>
    <property type="match status" value="1"/>
</dbReference>
<dbReference type="FunFam" id="3.30.70.330:FF:000825">
    <property type="entry name" value="Pre-rRNA-processing protein ESF2"/>
    <property type="match status" value="1"/>
</dbReference>
<dbReference type="Gene3D" id="3.30.70.330">
    <property type="match status" value="1"/>
</dbReference>
<dbReference type="InterPro" id="IPR039119">
    <property type="entry name" value="ABT1/Esf2"/>
</dbReference>
<dbReference type="InterPro" id="IPR034353">
    <property type="entry name" value="ABT1/ESF2_RRM"/>
</dbReference>
<dbReference type="InterPro" id="IPR012677">
    <property type="entry name" value="Nucleotide-bd_a/b_plait_sf"/>
</dbReference>
<dbReference type="InterPro" id="IPR035979">
    <property type="entry name" value="RBD_domain_sf"/>
</dbReference>
<dbReference type="PANTHER" id="PTHR12311">
    <property type="entry name" value="ACTIVATOR OF BASAL TRANSCRIPTION 1"/>
    <property type="match status" value="1"/>
</dbReference>
<dbReference type="PANTHER" id="PTHR12311:SF7">
    <property type="entry name" value="ACTIVATOR OF BASAL TRANSCRIPTION 1"/>
    <property type="match status" value="1"/>
</dbReference>
<dbReference type="SUPFAM" id="SSF54928">
    <property type="entry name" value="RNA-binding domain, RBD"/>
    <property type="match status" value="1"/>
</dbReference>
<evidence type="ECO:0000250" key="1"/>
<evidence type="ECO:0000256" key="2">
    <source>
        <dbReference type="SAM" id="MobiDB-lite"/>
    </source>
</evidence>
<evidence type="ECO:0000305" key="3"/>
<organism>
    <name type="scientific">Candida albicans (strain SC5314 / ATCC MYA-2876)</name>
    <name type="common">Yeast</name>
    <dbReference type="NCBI Taxonomy" id="237561"/>
    <lineage>
        <taxon>Eukaryota</taxon>
        <taxon>Fungi</taxon>
        <taxon>Dikarya</taxon>
        <taxon>Ascomycota</taxon>
        <taxon>Saccharomycotina</taxon>
        <taxon>Pichiomycetes</taxon>
        <taxon>Debaryomycetaceae</taxon>
        <taxon>Candida/Lodderomyces clade</taxon>
        <taxon>Candida</taxon>
    </lineage>
</organism>
<protein>
    <recommendedName>
        <fullName>Pre-rRNA-processing protein ESF2</fullName>
    </recommendedName>
    <alternativeName>
        <fullName>18S rRNA factor 2</fullName>
    </alternativeName>
</protein>
<name>ESF2_CANAL</name>
<gene>
    <name type="primary">ESF2</name>
    <name type="ordered locus">CAALFM_C502070CA</name>
    <name type="ORF">CaO19.10670</name>
    <name type="ORF">CaO19.3161</name>
</gene>
<reference key="1">
    <citation type="journal article" date="2004" name="Proc. Natl. Acad. Sci. U.S.A.">
        <title>The diploid genome sequence of Candida albicans.</title>
        <authorList>
            <person name="Jones T."/>
            <person name="Federspiel N.A."/>
            <person name="Chibana H."/>
            <person name="Dungan J."/>
            <person name="Kalman S."/>
            <person name="Magee B.B."/>
            <person name="Newport G."/>
            <person name="Thorstenson Y.R."/>
            <person name="Agabian N."/>
            <person name="Magee P.T."/>
            <person name="Davis R.W."/>
            <person name="Scherer S."/>
        </authorList>
    </citation>
    <scope>NUCLEOTIDE SEQUENCE [LARGE SCALE GENOMIC DNA]</scope>
    <source>
        <strain>SC5314 / ATCC MYA-2876</strain>
    </source>
</reference>
<reference key="2">
    <citation type="journal article" date="2007" name="Genome Biol.">
        <title>Assembly of the Candida albicans genome into sixteen supercontigs aligned on the eight chromosomes.</title>
        <authorList>
            <person name="van het Hoog M."/>
            <person name="Rast T.J."/>
            <person name="Martchenko M."/>
            <person name="Grindle S."/>
            <person name="Dignard D."/>
            <person name="Hogues H."/>
            <person name="Cuomo C."/>
            <person name="Berriman M."/>
            <person name="Scherer S."/>
            <person name="Magee B.B."/>
            <person name="Whiteway M."/>
            <person name="Chibana H."/>
            <person name="Nantel A."/>
            <person name="Magee P.T."/>
        </authorList>
    </citation>
    <scope>GENOME REANNOTATION</scope>
    <source>
        <strain>SC5314 / ATCC MYA-2876</strain>
    </source>
</reference>
<reference key="3">
    <citation type="journal article" date="2013" name="Genome Biol.">
        <title>Assembly of a phased diploid Candida albicans genome facilitates allele-specific measurements and provides a simple model for repeat and indel structure.</title>
        <authorList>
            <person name="Muzzey D."/>
            <person name="Schwartz K."/>
            <person name="Weissman J.S."/>
            <person name="Sherlock G."/>
        </authorList>
    </citation>
    <scope>NUCLEOTIDE SEQUENCE [LARGE SCALE GENOMIC DNA]</scope>
    <scope>GENOME REANNOTATION</scope>
    <source>
        <strain>SC5314 / ATCC MYA-2876</strain>
    </source>
</reference>
<feature type="chain" id="PRO_0000285366" description="Pre-rRNA-processing protein ESF2">
    <location>
        <begin position="1"/>
        <end position="320"/>
    </location>
</feature>
<feature type="domain" description="RRM">
    <location>
        <begin position="124"/>
        <end position="214"/>
    </location>
</feature>
<feature type="region of interest" description="Disordered" evidence="2">
    <location>
        <begin position="1"/>
        <end position="98"/>
    </location>
</feature>
<feature type="region of interest" description="Disordered" evidence="2">
    <location>
        <begin position="272"/>
        <end position="309"/>
    </location>
</feature>
<feature type="compositionally biased region" description="Basic and acidic residues" evidence="2">
    <location>
        <begin position="1"/>
        <end position="10"/>
    </location>
</feature>
<feature type="compositionally biased region" description="Polar residues" evidence="2">
    <location>
        <begin position="27"/>
        <end position="39"/>
    </location>
</feature>
<feature type="compositionally biased region" description="Acidic residues" evidence="2">
    <location>
        <begin position="40"/>
        <end position="56"/>
    </location>
</feature>
<feature type="compositionally biased region" description="Basic and acidic residues" evidence="2">
    <location>
        <begin position="57"/>
        <end position="71"/>
    </location>
</feature>
<feature type="compositionally biased region" description="Acidic residues" evidence="2">
    <location>
        <begin position="73"/>
        <end position="90"/>
    </location>
</feature>
<feature type="compositionally biased region" description="Basic and acidic residues" evidence="2">
    <location>
        <begin position="276"/>
        <end position="285"/>
    </location>
</feature>
<feature type="compositionally biased region" description="Basic and acidic residues" evidence="2">
    <location>
        <begin position="296"/>
        <end position="309"/>
    </location>
</feature>